<gene>
    <name type="primary">HTR1B</name>
</gene>
<feature type="chain" id="PRO_0000271765" description="5-hydroxytryptamine receptor 1B">
    <location>
        <begin position="1"/>
        <end position="390"/>
    </location>
</feature>
<feature type="topological domain" description="Extracellular" evidence="1">
    <location>
        <begin position="1"/>
        <end position="46"/>
    </location>
</feature>
<feature type="transmembrane region" description="Helical; Name=1" evidence="1">
    <location>
        <begin position="47"/>
        <end position="72"/>
    </location>
</feature>
<feature type="topological domain" description="Cytoplasmic" evidence="1">
    <location>
        <begin position="73"/>
        <end position="86"/>
    </location>
</feature>
<feature type="transmembrane region" description="Helical; Name=2" evidence="1">
    <location>
        <begin position="87"/>
        <end position="111"/>
    </location>
</feature>
<feature type="topological domain" description="Extracellular" evidence="1">
    <location>
        <begin position="112"/>
        <end position="119"/>
    </location>
</feature>
<feature type="transmembrane region" description="Helical; Name=3" evidence="1">
    <location>
        <begin position="120"/>
        <end position="145"/>
    </location>
</feature>
<feature type="topological domain" description="Cytoplasmic" evidence="1">
    <location>
        <begin position="146"/>
        <end position="165"/>
    </location>
</feature>
<feature type="transmembrane region" description="Helical; Name=4" evidence="1">
    <location>
        <begin position="166"/>
        <end position="184"/>
    </location>
</feature>
<feature type="topological domain" description="Extracellular" evidence="1">
    <location>
        <begin position="185"/>
        <end position="205"/>
    </location>
</feature>
<feature type="transmembrane region" description="Helical; Name=5" evidence="1">
    <location>
        <begin position="206"/>
        <end position="229"/>
    </location>
</feature>
<feature type="topological domain" description="Cytoplasmic" evidence="1">
    <location>
        <begin position="230"/>
        <end position="315"/>
    </location>
</feature>
<feature type="transmembrane region" description="Helical; Name=6" evidence="1">
    <location>
        <begin position="316"/>
        <end position="337"/>
    </location>
</feature>
<feature type="topological domain" description="Extracellular" evidence="1">
    <location>
        <begin position="338"/>
        <end position="347"/>
    </location>
</feature>
<feature type="transmembrane region" description="Helical; Name=7" evidence="1">
    <location>
        <begin position="348"/>
        <end position="370"/>
    </location>
</feature>
<feature type="topological domain" description="Cytoplasmic" evidence="1">
    <location>
        <begin position="371"/>
        <end position="390"/>
    </location>
</feature>
<feature type="region of interest" description="Disordered" evidence="5">
    <location>
        <begin position="1"/>
        <end position="21"/>
    </location>
</feature>
<feature type="region of interest" description="Disordered" evidence="5">
    <location>
        <begin position="251"/>
        <end position="282"/>
    </location>
</feature>
<feature type="short sequence motif" description="DRY motif; important for ligand-induced conformation changes and signaling" evidence="2">
    <location>
        <begin position="146"/>
        <end position="148"/>
    </location>
</feature>
<feature type="short sequence motif" description="NPxxY motif; important for ligand-induced conformation changes and signaling" evidence="2">
    <location>
        <begin position="365"/>
        <end position="369"/>
    </location>
</feature>
<feature type="compositionally biased region" description="Polar residues" evidence="5">
    <location>
        <begin position="255"/>
        <end position="272"/>
    </location>
</feature>
<feature type="binding site" evidence="1">
    <location>
        <position position="129"/>
    </location>
    <ligand>
        <name>ergotamine</name>
        <dbReference type="ChEBI" id="CHEBI:190463"/>
        <note>agonist</note>
    </ligand>
</feature>
<feature type="binding site" evidence="1">
    <location>
        <position position="134"/>
    </location>
    <ligand>
        <name>ergotamine</name>
        <dbReference type="ChEBI" id="CHEBI:190463"/>
        <note>agonist</note>
    </ligand>
</feature>
<feature type="binding site" evidence="1">
    <location>
        <position position="201"/>
    </location>
    <ligand>
        <name>ergotamine</name>
        <dbReference type="ChEBI" id="CHEBI:190463"/>
        <note>agonist</note>
    </ligand>
</feature>
<feature type="site" description="Important for species-specific agonist sensitivity" evidence="1">
    <location>
        <position position="355"/>
    </location>
</feature>
<feature type="lipid moiety-binding region" description="S-palmitoyl cysteine" evidence="3">
    <location>
        <position position="388"/>
    </location>
</feature>
<feature type="glycosylation site" description="N-linked (GlcNAc...) asparagine" evidence="3">
    <location>
        <position position="24"/>
    </location>
</feature>
<feature type="glycosylation site" description="N-linked (GlcNAc...) asparagine" evidence="3">
    <location>
        <position position="32"/>
    </location>
</feature>
<feature type="disulfide bond" evidence="4">
    <location>
        <begin position="122"/>
        <end position="199"/>
    </location>
</feature>
<name>5HT1B_HORSE</name>
<dbReference type="EMBL" id="AB264326">
    <property type="protein sequence ID" value="BAF32953.1"/>
    <property type="molecule type" value="mRNA"/>
</dbReference>
<dbReference type="RefSeq" id="NP_001075248.1">
    <property type="nucleotide sequence ID" value="NM_001081779.1"/>
</dbReference>
<dbReference type="SMR" id="Q0EAB5"/>
<dbReference type="FunCoup" id="Q0EAB5">
    <property type="interactions" value="691"/>
</dbReference>
<dbReference type="STRING" id="9796.ENSECAP00000031988"/>
<dbReference type="GlyCosmos" id="Q0EAB5">
    <property type="glycosylation" value="2 sites, No reported glycans"/>
</dbReference>
<dbReference type="PaxDb" id="9796-ENSECAP00000031988"/>
<dbReference type="GeneID" id="100009680"/>
<dbReference type="KEGG" id="ecb:100009680"/>
<dbReference type="CTD" id="3351"/>
<dbReference type="InParanoid" id="Q0EAB5"/>
<dbReference type="OMA" id="RFRCCRA"/>
<dbReference type="OrthoDB" id="5956310at2759"/>
<dbReference type="Proteomes" id="UP000002281">
    <property type="component" value="Chromosome 10"/>
</dbReference>
<dbReference type="Bgee" id="ENSECAG00000000649">
    <property type="expression patterns" value="Expressed in trophectoderm and 10 other cell types or tissues"/>
</dbReference>
<dbReference type="GO" id="GO:0030425">
    <property type="term" value="C:dendrite"/>
    <property type="evidence" value="ECO:0000318"/>
    <property type="project" value="GO_Central"/>
</dbReference>
<dbReference type="GO" id="GO:0005886">
    <property type="term" value="C:plasma membrane"/>
    <property type="evidence" value="ECO:0000250"/>
    <property type="project" value="UniProtKB"/>
</dbReference>
<dbReference type="GO" id="GO:0045202">
    <property type="term" value="C:synapse"/>
    <property type="evidence" value="ECO:0007669"/>
    <property type="project" value="GOC"/>
</dbReference>
<dbReference type="GO" id="GO:0004993">
    <property type="term" value="F:G protein-coupled serotonin receptor activity"/>
    <property type="evidence" value="ECO:0000250"/>
    <property type="project" value="UniProtKB"/>
</dbReference>
<dbReference type="GO" id="GO:0030594">
    <property type="term" value="F:neurotransmitter receptor activity"/>
    <property type="evidence" value="ECO:0000318"/>
    <property type="project" value="GO_Central"/>
</dbReference>
<dbReference type="GO" id="GO:0007198">
    <property type="term" value="P:adenylate cyclase-inhibiting serotonin receptor signaling pathway"/>
    <property type="evidence" value="ECO:0000250"/>
    <property type="project" value="UniProtKB"/>
</dbReference>
<dbReference type="GO" id="GO:0046849">
    <property type="term" value="P:bone remodeling"/>
    <property type="evidence" value="ECO:0007669"/>
    <property type="project" value="InterPro"/>
</dbReference>
<dbReference type="GO" id="GO:0071312">
    <property type="term" value="P:cellular response to alkaloid"/>
    <property type="evidence" value="ECO:0000250"/>
    <property type="project" value="UniProtKB"/>
</dbReference>
<dbReference type="GO" id="GO:0071466">
    <property type="term" value="P:cellular response to xenobiotic stimulus"/>
    <property type="evidence" value="ECO:0000250"/>
    <property type="project" value="UniProtKB"/>
</dbReference>
<dbReference type="GO" id="GO:0007268">
    <property type="term" value="P:chemical synaptic transmission"/>
    <property type="evidence" value="ECO:0000318"/>
    <property type="project" value="GO_Central"/>
</dbReference>
<dbReference type="GO" id="GO:0007187">
    <property type="term" value="P:G protein-coupled receptor signaling pathway, coupled to cyclic nucleotide second messenger"/>
    <property type="evidence" value="ECO:0000318"/>
    <property type="project" value="GO_Central"/>
</dbReference>
<dbReference type="GO" id="GO:0014063">
    <property type="term" value="P:negative regulation of serotonin secretion"/>
    <property type="evidence" value="ECO:0000250"/>
    <property type="project" value="UniProtKB"/>
</dbReference>
<dbReference type="GO" id="GO:0050795">
    <property type="term" value="P:regulation of behavior"/>
    <property type="evidence" value="ECO:0007669"/>
    <property type="project" value="InterPro"/>
</dbReference>
<dbReference type="GO" id="GO:0042310">
    <property type="term" value="P:vasoconstriction"/>
    <property type="evidence" value="ECO:0007669"/>
    <property type="project" value="InterPro"/>
</dbReference>
<dbReference type="CDD" id="cd15333">
    <property type="entry name" value="7tmA_5-HT1B_1D"/>
    <property type="match status" value="1"/>
</dbReference>
<dbReference type="Gene3D" id="1.20.1070.10">
    <property type="entry name" value="Rhodopsin 7-helix transmembrane proteins"/>
    <property type="match status" value="1"/>
</dbReference>
<dbReference type="InterPro" id="IPR002147">
    <property type="entry name" value="5HT1B_rcpt"/>
</dbReference>
<dbReference type="InterPro" id="IPR002231">
    <property type="entry name" value="5HT_rcpt"/>
</dbReference>
<dbReference type="InterPro" id="IPR000276">
    <property type="entry name" value="GPCR_Rhodpsn"/>
</dbReference>
<dbReference type="InterPro" id="IPR017452">
    <property type="entry name" value="GPCR_Rhodpsn_7TM"/>
</dbReference>
<dbReference type="PANTHER" id="PTHR24248:SF201">
    <property type="entry name" value="5-HYDROXYTRYPTAMINE RECEPTOR 1B"/>
    <property type="match status" value="1"/>
</dbReference>
<dbReference type="PANTHER" id="PTHR24248">
    <property type="entry name" value="ADRENERGIC RECEPTOR-RELATED G-PROTEIN COUPLED RECEPTOR"/>
    <property type="match status" value="1"/>
</dbReference>
<dbReference type="Pfam" id="PF00001">
    <property type="entry name" value="7tm_1"/>
    <property type="match status" value="1"/>
</dbReference>
<dbReference type="PRINTS" id="PR00513">
    <property type="entry name" value="5HT1BRECEPTR"/>
</dbReference>
<dbReference type="PRINTS" id="PR01101">
    <property type="entry name" value="5HTRECEPTOR"/>
</dbReference>
<dbReference type="PRINTS" id="PR00237">
    <property type="entry name" value="GPCRRHODOPSN"/>
</dbReference>
<dbReference type="SMART" id="SM01381">
    <property type="entry name" value="7TM_GPCR_Srsx"/>
    <property type="match status" value="1"/>
</dbReference>
<dbReference type="SUPFAM" id="SSF81321">
    <property type="entry name" value="Family A G protein-coupled receptor-like"/>
    <property type="match status" value="1"/>
</dbReference>
<dbReference type="PROSITE" id="PS00237">
    <property type="entry name" value="G_PROTEIN_RECEP_F1_1"/>
    <property type="match status" value="1"/>
</dbReference>
<dbReference type="PROSITE" id="PS50262">
    <property type="entry name" value="G_PROTEIN_RECEP_F1_2"/>
    <property type="match status" value="1"/>
</dbReference>
<accession>Q0EAB5</accession>
<organism>
    <name type="scientific">Equus caballus</name>
    <name type="common">Horse</name>
    <dbReference type="NCBI Taxonomy" id="9796"/>
    <lineage>
        <taxon>Eukaryota</taxon>
        <taxon>Metazoa</taxon>
        <taxon>Chordata</taxon>
        <taxon>Craniata</taxon>
        <taxon>Vertebrata</taxon>
        <taxon>Euteleostomi</taxon>
        <taxon>Mammalia</taxon>
        <taxon>Eutheria</taxon>
        <taxon>Laurasiatheria</taxon>
        <taxon>Perissodactyla</taxon>
        <taxon>Equidae</taxon>
        <taxon>Equus</taxon>
    </lineage>
</organism>
<keyword id="KW-0085">Behavior</keyword>
<keyword id="KW-1003">Cell membrane</keyword>
<keyword id="KW-1015">Disulfide bond</keyword>
<keyword id="KW-0297">G-protein coupled receptor</keyword>
<keyword id="KW-0325">Glycoprotein</keyword>
<keyword id="KW-0449">Lipoprotein</keyword>
<keyword id="KW-0472">Membrane</keyword>
<keyword id="KW-0564">Palmitate</keyword>
<keyword id="KW-0597">Phosphoprotein</keyword>
<keyword id="KW-0675">Receptor</keyword>
<keyword id="KW-1185">Reference proteome</keyword>
<keyword id="KW-0807">Transducer</keyword>
<keyword id="KW-0812">Transmembrane</keyword>
<keyword id="KW-1133">Transmembrane helix</keyword>
<sequence length="390" mass="43350">MEETGAQCAPPPPAGSQTGVSQVNLSAAPSHNCSTEGYVYQDSVALPWKVLLVVLLALITLATTLSNAFVIATVYRTRKLHTPANYLIASLAVTDLLVSILVMPISTMYVVTGRWTLGQVVCDFWLSSDITCCTASILHLCVIALDRYWAITDAVEYSAKRTPKRAAVMIALVWVFSISISLPPFFWRQAKAEEEVLDCLVNTDHILYTVYSTVGAFYFPTLLLIALYSRIYVEARSRILKQTPNRTGKRLTRAQLMTDSPGSTSSVTSINSRAPDVPSESGSPVYVNQVKVRVSDALVEKKKLMAARERKATKTLGIILGAFIVCWLPFFIISLVMPICKDACWFHLAIFDFFTWLGYLNSLINPIIYTMSNEDFKQAFHKLIRFKCAS</sequence>
<reference key="1">
    <citation type="submission" date="2006-07" db="EMBL/GenBank/DDBJ databases">
        <title>Equus caballus 5-hydroxytryptamine (serotonin) receptor 1B (HTR1B), mRNA.</title>
        <authorList>
            <person name="Momozawa Y."/>
            <person name="Takeuchi Y."/>
            <person name="Mori Y."/>
        </authorList>
    </citation>
    <scope>NUCLEOTIDE SEQUENCE [MRNA]</scope>
</reference>
<protein>
    <recommendedName>
        <fullName>5-hydroxytryptamine receptor 1B</fullName>
        <shortName>5-HT-1B</shortName>
        <shortName>5-HT1B</shortName>
    </recommendedName>
    <alternativeName>
        <fullName>Serotonin receptor 1B</fullName>
    </alternativeName>
</protein>
<comment type="function">
    <text evidence="1">G-protein coupled receptor for 5-hydroxytryptamine (serotonin). Also functions as a receptor for ergot alkaloid derivatives, various anxiolytic and antidepressant drugs and other psychoactive substances, such as lysergic acid diethylamide (LSD). Ligand binding causes a conformation change that triggers signaling via guanine nucleotide-binding proteins (G proteins) and modulates the activity of downstream effectors, such as adenylate cyclase. HTR1B is coupled to G(i)/G(o) G alpha proteins and mediates inhibitory neurotransmission by inhibiting adenylate cyclase activity. Arrestin family members inhibit signaling via G proteins and mediate activation of alternative signaling pathways. Regulates the release of 5-hydroxytryptamine, dopamine and acetylcholine in the brain, and thereby affects neural activity, nociceptive processing, pain perception, mood and behavior. Besides, plays a role in vasoconstriction of cerebral arteries.</text>
</comment>
<comment type="subunit">
    <text evidence="1">Homodimer. Heterodimer with HTR1D.</text>
</comment>
<comment type="subcellular location">
    <subcellularLocation>
        <location evidence="1">Cell membrane</location>
        <topology evidence="1">Multi-pass membrane protein</topology>
    </subcellularLocation>
</comment>
<comment type="domain">
    <text evidence="1">Ligands are bound in a hydrophobic pocket formed by the transmembrane helices.</text>
</comment>
<comment type="domain">
    <text evidence="1">A residue in the 7th transmembrane region ('Thr-355' in human, 'Asn-351' in mouse and rat) is important for species-specific sensitivity to various agonists.</text>
</comment>
<comment type="PTM">
    <text evidence="1">Phosphorylated. Desensitization of the receptor may be mediated by its phosphorylation.</text>
</comment>
<comment type="PTM">
    <text evidence="1">Palmitoylated.</text>
</comment>
<comment type="similarity">
    <text evidence="4">Belongs to the G-protein coupled receptor 1 family.</text>
</comment>
<proteinExistence type="evidence at transcript level"/>
<evidence type="ECO:0000250" key="1">
    <source>
        <dbReference type="UniProtKB" id="P28222"/>
    </source>
</evidence>
<evidence type="ECO:0000250" key="2">
    <source>
        <dbReference type="UniProtKB" id="P41595"/>
    </source>
</evidence>
<evidence type="ECO:0000255" key="3"/>
<evidence type="ECO:0000255" key="4">
    <source>
        <dbReference type="PROSITE-ProRule" id="PRU00521"/>
    </source>
</evidence>
<evidence type="ECO:0000256" key="5">
    <source>
        <dbReference type="SAM" id="MobiDB-lite"/>
    </source>
</evidence>